<feature type="chain" id="PRO_1000185326" description="Ribosomal protein bS6--L-glutamate ligase">
    <location>
        <begin position="1"/>
        <end position="300"/>
    </location>
</feature>
<feature type="domain" description="ATP-grasp" evidence="1">
    <location>
        <begin position="104"/>
        <end position="287"/>
    </location>
</feature>
<feature type="binding site" evidence="1">
    <location>
        <position position="141"/>
    </location>
    <ligand>
        <name>ATP</name>
        <dbReference type="ChEBI" id="CHEBI:30616"/>
    </ligand>
</feature>
<feature type="binding site" evidence="1">
    <location>
        <begin position="178"/>
        <end position="179"/>
    </location>
    <ligand>
        <name>ATP</name>
        <dbReference type="ChEBI" id="CHEBI:30616"/>
    </ligand>
</feature>
<feature type="binding site" evidence="1">
    <location>
        <position position="187"/>
    </location>
    <ligand>
        <name>ATP</name>
        <dbReference type="ChEBI" id="CHEBI:30616"/>
    </ligand>
</feature>
<feature type="binding site" evidence="1">
    <location>
        <begin position="211"/>
        <end position="213"/>
    </location>
    <ligand>
        <name>ATP</name>
        <dbReference type="ChEBI" id="CHEBI:30616"/>
    </ligand>
</feature>
<feature type="binding site" evidence="1">
    <location>
        <position position="248"/>
    </location>
    <ligand>
        <name>Mg(2+)</name>
        <dbReference type="ChEBI" id="CHEBI:18420"/>
        <label>1</label>
    </ligand>
</feature>
<feature type="binding site" evidence="1">
    <location>
        <position position="248"/>
    </location>
    <ligand>
        <name>Mn(2+)</name>
        <dbReference type="ChEBI" id="CHEBI:29035"/>
        <label>1</label>
    </ligand>
</feature>
<feature type="binding site" evidence="1">
    <location>
        <position position="260"/>
    </location>
    <ligand>
        <name>Mg(2+)</name>
        <dbReference type="ChEBI" id="CHEBI:18420"/>
        <label>1</label>
    </ligand>
</feature>
<feature type="binding site" evidence="1">
    <location>
        <position position="260"/>
    </location>
    <ligand>
        <name>Mg(2+)</name>
        <dbReference type="ChEBI" id="CHEBI:18420"/>
        <label>2</label>
    </ligand>
</feature>
<feature type="binding site" evidence="1">
    <location>
        <position position="260"/>
    </location>
    <ligand>
        <name>Mn(2+)</name>
        <dbReference type="ChEBI" id="CHEBI:29035"/>
        <label>1</label>
    </ligand>
</feature>
<feature type="binding site" evidence="1">
    <location>
        <position position="260"/>
    </location>
    <ligand>
        <name>Mn(2+)</name>
        <dbReference type="ChEBI" id="CHEBI:29035"/>
        <label>2</label>
    </ligand>
</feature>
<feature type="binding site" evidence="1">
    <location>
        <position position="262"/>
    </location>
    <ligand>
        <name>Mg(2+)</name>
        <dbReference type="ChEBI" id="CHEBI:18420"/>
        <label>2</label>
    </ligand>
</feature>
<feature type="binding site" evidence="1">
    <location>
        <position position="262"/>
    </location>
    <ligand>
        <name>Mn(2+)</name>
        <dbReference type="ChEBI" id="CHEBI:29035"/>
        <label>2</label>
    </ligand>
</feature>
<organism>
    <name type="scientific">Salmonella paratyphi C (strain RKS4594)</name>
    <dbReference type="NCBI Taxonomy" id="476213"/>
    <lineage>
        <taxon>Bacteria</taxon>
        <taxon>Pseudomonadati</taxon>
        <taxon>Pseudomonadota</taxon>
        <taxon>Gammaproteobacteria</taxon>
        <taxon>Enterobacterales</taxon>
        <taxon>Enterobacteriaceae</taxon>
        <taxon>Salmonella</taxon>
    </lineage>
</organism>
<reference key="1">
    <citation type="journal article" date="2009" name="PLoS ONE">
        <title>Salmonella paratyphi C: genetic divergence from Salmonella choleraesuis and pathogenic convergence with Salmonella typhi.</title>
        <authorList>
            <person name="Liu W.-Q."/>
            <person name="Feng Y."/>
            <person name="Wang Y."/>
            <person name="Zou Q.-H."/>
            <person name="Chen F."/>
            <person name="Guo J.-T."/>
            <person name="Peng Y.-H."/>
            <person name="Jin Y."/>
            <person name="Li Y.-G."/>
            <person name="Hu S.-N."/>
            <person name="Johnston R.N."/>
            <person name="Liu G.-R."/>
            <person name="Liu S.-L."/>
        </authorList>
    </citation>
    <scope>NUCLEOTIDE SEQUENCE [LARGE SCALE GENOMIC DNA]</scope>
    <source>
        <strain>RKS4594</strain>
    </source>
</reference>
<comment type="function">
    <text evidence="1">An L-glutamate ligase that catalyzes the ATP-dependent post-translational addition of glutamate residues to the C-terminus of ribosomal protein bS6 (RpsF). Is also able to catalyze the synthesis of poly-alpha-glutamate in vitro, via ATP hydrolysis from unprotected glutamate as substrate. The number of glutamate residues added to either RpsF or to poly-alpha-glutamate changes with pH.</text>
</comment>
<comment type="cofactor">
    <cofactor evidence="1">
        <name>Mg(2+)</name>
        <dbReference type="ChEBI" id="CHEBI:18420"/>
    </cofactor>
    <cofactor evidence="1">
        <name>Mn(2+)</name>
        <dbReference type="ChEBI" id="CHEBI:29035"/>
    </cofactor>
    <text evidence="1">Binds 2 magnesium or manganese ions per subunit.</text>
</comment>
<comment type="similarity">
    <text evidence="1">Belongs to the RimK family.</text>
</comment>
<evidence type="ECO:0000255" key="1">
    <source>
        <dbReference type="HAMAP-Rule" id="MF_01552"/>
    </source>
</evidence>
<keyword id="KW-0067">ATP-binding</keyword>
<keyword id="KW-0436">Ligase</keyword>
<keyword id="KW-0460">Magnesium</keyword>
<keyword id="KW-0464">Manganese</keyword>
<keyword id="KW-0479">Metal-binding</keyword>
<keyword id="KW-0547">Nucleotide-binding</keyword>
<keyword id="KW-0648">Protein biosynthesis</keyword>
<gene>
    <name evidence="1" type="primary">rimK</name>
    <name type="ordered locus">SPC_0914</name>
</gene>
<accession>C0PXN2</accession>
<protein>
    <recommendedName>
        <fullName evidence="1">Ribosomal protein bS6--L-glutamate ligase</fullName>
        <ecNumber evidence="1">6.3.2.-</ecNumber>
    </recommendedName>
    <alternativeName>
        <fullName evidence="1">Poly-alpha-glutamate synthase</fullName>
    </alternativeName>
    <alternativeName>
        <fullName evidence="1">Ribosomal protein bS6 modification protein</fullName>
    </alternativeName>
</protein>
<dbReference type="EC" id="6.3.2.-" evidence="1"/>
<dbReference type="EMBL" id="CP000857">
    <property type="protein sequence ID" value="ACN45082.1"/>
    <property type="molecule type" value="Genomic_DNA"/>
</dbReference>
<dbReference type="RefSeq" id="WP_000684361.1">
    <property type="nucleotide sequence ID" value="NC_012125.1"/>
</dbReference>
<dbReference type="SMR" id="C0PXN2"/>
<dbReference type="KEGG" id="sei:SPC_0914"/>
<dbReference type="HOGENOM" id="CLU_054353_0_1_6"/>
<dbReference type="Proteomes" id="UP000001599">
    <property type="component" value="Chromosome"/>
</dbReference>
<dbReference type="GO" id="GO:0005737">
    <property type="term" value="C:cytoplasm"/>
    <property type="evidence" value="ECO:0007669"/>
    <property type="project" value="TreeGrafter"/>
</dbReference>
<dbReference type="GO" id="GO:0005524">
    <property type="term" value="F:ATP binding"/>
    <property type="evidence" value="ECO:0007669"/>
    <property type="project" value="UniProtKB-UniRule"/>
</dbReference>
<dbReference type="GO" id="GO:0046872">
    <property type="term" value="F:metal ion binding"/>
    <property type="evidence" value="ECO:0007669"/>
    <property type="project" value="UniProtKB-KW"/>
</dbReference>
<dbReference type="GO" id="GO:0018169">
    <property type="term" value="F:ribosomal S6-glutamic acid ligase activity"/>
    <property type="evidence" value="ECO:0007669"/>
    <property type="project" value="UniProtKB-UniRule"/>
</dbReference>
<dbReference type="GO" id="GO:0036211">
    <property type="term" value="P:protein modification process"/>
    <property type="evidence" value="ECO:0007669"/>
    <property type="project" value="InterPro"/>
</dbReference>
<dbReference type="GO" id="GO:0009432">
    <property type="term" value="P:SOS response"/>
    <property type="evidence" value="ECO:0007669"/>
    <property type="project" value="TreeGrafter"/>
</dbReference>
<dbReference type="GO" id="GO:0006412">
    <property type="term" value="P:translation"/>
    <property type="evidence" value="ECO:0007669"/>
    <property type="project" value="UniProtKB-KW"/>
</dbReference>
<dbReference type="FunFam" id="3.40.50.20:FF:000004">
    <property type="entry name" value="Probable alpha-L-glutamate ligase"/>
    <property type="match status" value="1"/>
</dbReference>
<dbReference type="FunFam" id="3.30.1490.20:FF:000005">
    <property type="entry name" value="Probable alpha-L-glutamate ligase 1"/>
    <property type="match status" value="1"/>
</dbReference>
<dbReference type="FunFam" id="3.30.470.20:FF:000016">
    <property type="entry name" value="Ribosomal protein S6--L-glutamate ligase"/>
    <property type="match status" value="1"/>
</dbReference>
<dbReference type="Gene3D" id="3.40.50.20">
    <property type="match status" value="1"/>
</dbReference>
<dbReference type="Gene3D" id="3.30.1490.20">
    <property type="entry name" value="ATP-grasp fold, A domain"/>
    <property type="match status" value="1"/>
</dbReference>
<dbReference type="Gene3D" id="3.30.470.20">
    <property type="entry name" value="ATP-grasp fold, B domain"/>
    <property type="match status" value="1"/>
</dbReference>
<dbReference type="HAMAP" id="MF_01552">
    <property type="entry name" value="RimK"/>
    <property type="match status" value="1"/>
</dbReference>
<dbReference type="InterPro" id="IPR011761">
    <property type="entry name" value="ATP-grasp"/>
</dbReference>
<dbReference type="InterPro" id="IPR013651">
    <property type="entry name" value="ATP-grasp_RimK-type"/>
</dbReference>
<dbReference type="InterPro" id="IPR013815">
    <property type="entry name" value="ATP_grasp_subdomain_1"/>
</dbReference>
<dbReference type="InterPro" id="IPR023533">
    <property type="entry name" value="RimK"/>
</dbReference>
<dbReference type="InterPro" id="IPR041107">
    <property type="entry name" value="Rimk_N"/>
</dbReference>
<dbReference type="InterPro" id="IPR004666">
    <property type="entry name" value="Rp_bS6_RimK/Lys_biosynth_LsyX"/>
</dbReference>
<dbReference type="NCBIfam" id="NF007764">
    <property type="entry name" value="PRK10446.1"/>
    <property type="match status" value="1"/>
</dbReference>
<dbReference type="NCBIfam" id="TIGR00768">
    <property type="entry name" value="rimK_fam"/>
    <property type="match status" value="1"/>
</dbReference>
<dbReference type="PANTHER" id="PTHR21621:SF7">
    <property type="entry name" value="RIBOSOMAL PROTEIN BS6--L-GLUTAMATE LIGASE"/>
    <property type="match status" value="1"/>
</dbReference>
<dbReference type="PANTHER" id="PTHR21621">
    <property type="entry name" value="RIBOSOMAL PROTEIN S6 MODIFICATION PROTEIN"/>
    <property type="match status" value="1"/>
</dbReference>
<dbReference type="Pfam" id="PF08443">
    <property type="entry name" value="RimK"/>
    <property type="match status" value="1"/>
</dbReference>
<dbReference type="Pfam" id="PF18030">
    <property type="entry name" value="Rimk_N"/>
    <property type="match status" value="1"/>
</dbReference>
<dbReference type="SUPFAM" id="SSF56059">
    <property type="entry name" value="Glutathione synthetase ATP-binding domain-like"/>
    <property type="match status" value="1"/>
</dbReference>
<dbReference type="PROSITE" id="PS50975">
    <property type="entry name" value="ATP_GRASP"/>
    <property type="match status" value="1"/>
</dbReference>
<name>RIMK_SALPC</name>
<proteinExistence type="inferred from homology"/>
<sequence>MKIAILSRDGTLYSCKRLREAAMRRGHLVEILDPLSCYMNINPAASSIHYKGRRLPHFDAVIPRIGSAITFYGTAALRQFELLGSYPLNESVAITRARDKLRSLQLLARQGIDLPITGIAHSPDDTSDLIKMVGGAPLVVKLVEGTQGIGVVLAETRQAAESVIDAFRGLNAHILVQEYIAEAKGCDIRCLVVGNEVVAAIERCAKAGDFRSNLHRGGVASIATITPRERDIAIKAAQTLGLDVAGVDILRAARGPLVMEVNASPGLEGIEKTTGVDIAGRMIQWIERHATPEFCLKIGG</sequence>